<accession>B7LVW4</accession>
<evidence type="ECO:0000255" key="1">
    <source>
        <dbReference type="HAMAP-Rule" id="MF_01551"/>
    </source>
</evidence>
<name>RLMM_ESCF3</name>
<sequence>MNKVVLLCRPGFEKECAAEITDKAGRQEIFGFARVKENAGYVIYECYQAEDGDKLIRELPFSSLIFARQWFVVGELLQHLPPEDRITPIVGMLQGVVEKGGELRVEVADTNESKELLKFCRKFTVPLRAALRDAGVLANYETPKRPVVHVFFIAPGCCYTGYSYSNNNSPFYMGIPRLKFPADAPSRSTLKLEEAFHVFIPADEWDERLANGMWAVDLGACPGGWTYQLVKRNMWVYSVDNGPMAQSLMDTGQVTWLREDGFKFRPTRNNISWMVCDMVEKPAKVAALMAQWLVNGWCRETIFNLKLPMKKRYEEVSHNLAYIQAQLDEHGINAQIQARQLYHDREEVTVHVRRIWAAVGGRRDER</sequence>
<keyword id="KW-0963">Cytoplasm</keyword>
<keyword id="KW-0489">Methyltransferase</keyword>
<keyword id="KW-0698">rRNA processing</keyword>
<keyword id="KW-0949">S-adenosyl-L-methionine</keyword>
<keyword id="KW-0808">Transferase</keyword>
<comment type="function">
    <text evidence="1">Catalyzes the 2'-O-methylation at nucleotide C2498 in 23S rRNA.</text>
</comment>
<comment type="catalytic activity">
    <reaction evidence="1">
        <text>cytidine(2498) in 23S rRNA + S-adenosyl-L-methionine = 2'-O-methylcytidine(2498) in 23S rRNA + S-adenosyl-L-homocysteine + H(+)</text>
        <dbReference type="Rhea" id="RHEA:42788"/>
        <dbReference type="Rhea" id="RHEA-COMP:10244"/>
        <dbReference type="Rhea" id="RHEA-COMP:10245"/>
        <dbReference type="ChEBI" id="CHEBI:15378"/>
        <dbReference type="ChEBI" id="CHEBI:57856"/>
        <dbReference type="ChEBI" id="CHEBI:59789"/>
        <dbReference type="ChEBI" id="CHEBI:74495"/>
        <dbReference type="ChEBI" id="CHEBI:82748"/>
        <dbReference type="EC" id="2.1.1.186"/>
    </reaction>
</comment>
<comment type="subunit">
    <text evidence="1">Monomer.</text>
</comment>
<comment type="subcellular location">
    <subcellularLocation>
        <location evidence="1">Cytoplasm</location>
    </subcellularLocation>
</comment>
<comment type="similarity">
    <text evidence="1">Belongs to the class I-like SAM-binding methyltransferase superfamily. RNA methyltransferase RlmE family. RlmM subfamily.</text>
</comment>
<organism>
    <name type="scientific">Escherichia fergusonii (strain ATCC 35469 / DSM 13698 / CCUG 18766 / IAM 14443 / JCM 21226 / LMG 7866 / NBRC 102419 / NCTC 12128 / CDC 0568-73)</name>
    <dbReference type="NCBI Taxonomy" id="585054"/>
    <lineage>
        <taxon>Bacteria</taxon>
        <taxon>Pseudomonadati</taxon>
        <taxon>Pseudomonadota</taxon>
        <taxon>Gammaproteobacteria</taxon>
        <taxon>Enterobacterales</taxon>
        <taxon>Enterobacteriaceae</taxon>
        <taxon>Escherichia</taxon>
    </lineage>
</organism>
<proteinExistence type="inferred from homology"/>
<dbReference type="EC" id="2.1.1.186" evidence="1"/>
<dbReference type="EMBL" id="CU928158">
    <property type="protein sequence ID" value="CAQ87830.1"/>
    <property type="molecule type" value="Genomic_DNA"/>
</dbReference>
<dbReference type="RefSeq" id="WP_001045539.1">
    <property type="nucleotide sequence ID" value="NC_011740.1"/>
</dbReference>
<dbReference type="SMR" id="B7LVW4"/>
<dbReference type="GeneID" id="75058656"/>
<dbReference type="KEGG" id="efe:EFER_0261"/>
<dbReference type="HOGENOM" id="CLU_043780_0_0_6"/>
<dbReference type="OrthoDB" id="154490at2"/>
<dbReference type="Proteomes" id="UP000000745">
    <property type="component" value="Chromosome"/>
</dbReference>
<dbReference type="GO" id="GO:0005737">
    <property type="term" value="C:cytoplasm"/>
    <property type="evidence" value="ECO:0007669"/>
    <property type="project" value="UniProtKB-SubCell"/>
</dbReference>
<dbReference type="GO" id="GO:0008757">
    <property type="term" value="F:S-adenosylmethionine-dependent methyltransferase activity"/>
    <property type="evidence" value="ECO:0007669"/>
    <property type="project" value="UniProtKB-UniRule"/>
</dbReference>
<dbReference type="GO" id="GO:0032259">
    <property type="term" value="P:methylation"/>
    <property type="evidence" value="ECO:0007669"/>
    <property type="project" value="UniProtKB-KW"/>
</dbReference>
<dbReference type="GO" id="GO:0006364">
    <property type="term" value="P:rRNA processing"/>
    <property type="evidence" value="ECO:0007669"/>
    <property type="project" value="UniProtKB-UniRule"/>
</dbReference>
<dbReference type="FunFam" id="3.30.2300.20:FF:000001">
    <property type="entry name" value="Ribosomal RNA large subunit methyltransferase M"/>
    <property type="match status" value="1"/>
</dbReference>
<dbReference type="FunFam" id="3.40.50.150:FF:000020">
    <property type="entry name" value="Ribosomal RNA large subunit methyltransferase M"/>
    <property type="match status" value="1"/>
</dbReference>
<dbReference type="Gene3D" id="3.30.2300.20">
    <property type="match status" value="1"/>
</dbReference>
<dbReference type="Gene3D" id="3.30.70.2810">
    <property type="match status" value="1"/>
</dbReference>
<dbReference type="Gene3D" id="3.40.50.150">
    <property type="entry name" value="Vaccinia Virus protein VP39"/>
    <property type="match status" value="1"/>
</dbReference>
<dbReference type="HAMAP" id="MF_01551">
    <property type="entry name" value="23SrRNA_methyltr_M"/>
    <property type="match status" value="1"/>
</dbReference>
<dbReference type="InterPro" id="IPR040739">
    <property type="entry name" value="RlmM_FDX"/>
</dbReference>
<dbReference type="InterPro" id="IPR048646">
    <property type="entry name" value="RlmM_THUMP-like"/>
</dbReference>
<dbReference type="InterPro" id="IPR002877">
    <property type="entry name" value="RNA_MeTrfase_FtsJ_dom"/>
</dbReference>
<dbReference type="InterPro" id="IPR011224">
    <property type="entry name" value="rRNA_MeTrfase_M"/>
</dbReference>
<dbReference type="InterPro" id="IPR029063">
    <property type="entry name" value="SAM-dependent_MTases_sf"/>
</dbReference>
<dbReference type="NCBIfam" id="NF008734">
    <property type="entry name" value="PRK11760.1"/>
    <property type="match status" value="1"/>
</dbReference>
<dbReference type="PANTHER" id="PTHR37524">
    <property type="entry name" value="RIBOSOMAL RNA LARGE SUBUNIT METHYLTRANSFERASE M"/>
    <property type="match status" value="1"/>
</dbReference>
<dbReference type="PANTHER" id="PTHR37524:SF2">
    <property type="entry name" value="RIBOSOMAL RNA METHYLTRANSFERASE FTSJ DOMAIN-CONTAINING PROTEIN"/>
    <property type="match status" value="1"/>
</dbReference>
<dbReference type="Pfam" id="PF01728">
    <property type="entry name" value="FtsJ"/>
    <property type="match status" value="1"/>
</dbReference>
<dbReference type="Pfam" id="PF18125">
    <property type="entry name" value="RlmM_FDX"/>
    <property type="match status" value="1"/>
</dbReference>
<dbReference type="Pfam" id="PF21239">
    <property type="entry name" value="RLMM_N"/>
    <property type="match status" value="1"/>
</dbReference>
<dbReference type="PIRSF" id="PIRSF028774">
    <property type="entry name" value="UCP028774"/>
    <property type="match status" value="1"/>
</dbReference>
<dbReference type="SUPFAM" id="SSF53335">
    <property type="entry name" value="S-adenosyl-L-methionine-dependent methyltransferases"/>
    <property type="match status" value="1"/>
</dbReference>
<reference key="1">
    <citation type="journal article" date="2009" name="PLoS Genet.">
        <title>Organised genome dynamics in the Escherichia coli species results in highly diverse adaptive paths.</title>
        <authorList>
            <person name="Touchon M."/>
            <person name="Hoede C."/>
            <person name="Tenaillon O."/>
            <person name="Barbe V."/>
            <person name="Baeriswyl S."/>
            <person name="Bidet P."/>
            <person name="Bingen E."/>
            <person name="Bonacorsi S."/>
            <person name="Bouchier C."/>
            <person name="Bouvet O."/>
            <person name="Calteau A."/>
            <person name="Chiapello H."/>
            <person name="Clermont O."/>
            <person name="Cruveiller S."/>
            <person name="Danchin A."/>
            <person name="Diard M."/>
            <person name="Dossat C."/>
            <person name="Karoui M.E."/>
            <person name="Frapy E."/>
            <person name="Garry L."/>
            <person name="Ghigo J.M."/>
            <person name="Gilles A.M."/>
            <person name="Johnson J."/>
            <person name="Le Bouguenec C."/>
            <person name="Lescat M."/>
            <person name="Mangenot S."/>
            <person name="Martinez-Jehanne V."/>
            <person name="Matic I."/>
            <person name="Nassif X."/>
            <person name="Oztas S."/>
            <person name="Petit M.A."/>
            <person name="Pichon C."/>
            <person name="Rouy Z."/>
            <person name="Ruf C.S."/>
            <person name="Schneider D."/>
            <person name="Tourret J."/>
            <person name="Vacherie B."/>
            <person name="Vallenet D."/>
            <person name="Medigue C."/>
            <person name="Rocha E.P.C."/>
            <person name="Denamur E."/>
        </authorList>
    </citation>
    <scope>NUCLEOTIDE SEQUENCE [LARGE SCALE GENOMIC DNA]</scope>
    <source>
        <strain>ATCC 35469 / DSM 13698 / BCRC 15582 / CCUG 18766 / IAM 14443 / JCM 21226 / LMG 7866 / NBRC 102419 / NCTC 12128 / CDC 0568-73</strain>
    </source>
</reference>
<protein>
    <recommendedName>
        <fullName evidence="1">Ribosomal RNA large subunit methyltransferase M</fullName>
        <ecNumber evidence="1">2.1.1.186</ecNumber>
    </recommendedName>
    <alternativeName>
        <fullName evidence="1">23S rRNA (cytidine2498-2'-O)-methyltransferase</fullName>
    </alternativeName>
    <alternativeName>
        <fullName evidence="1">23S rRNA 2'-O-ribose methyltransferase RlmM</fullName>
    </alternativeName>
</protein>
<feature type="chain" id="PRO_1000201520" description="Ribosomal RNA large subunit methyltransferase M">
    <location>
        <begin position="1"/>
        <end position="366"/>
    </location>
</feature>
<feature type="active site" description="Proton acceptor" evidence="1">
    <location>
        <position position="306"/>
    </location>
</feature>
<feature type="binding site" evidence="1">
    <location>
        <position position="188"/>
    </location>
    <ligand>
        <name>S-adenosyl-L-methionine</name>
        <dbReference type="ChEBI" id="CHEBI:59789"/>
    </ligand>
</feature>
<feature type="binding site" evidence="1">
    <location>
        <begin position="221"/>
        <end position="224"/>
    </location>
    <ligand>
        <name>S-adenosyl-L-methionine</name>
        <dbReference type="ChEBI" id="CHEBI:59789"/>
    </ligand>
</feature>
<feature type="binding site" evidence="1">
    <location>
        <position position="240"/>
    </location>
    <ligand>
        <name>S-adenosyl-L-methionine</name>
        <dbReference type="ChEBI" id="CHEBI:59789"/>
    </ligand>
</feature>
<feature type="binding site" evidence="1">
    <location>
        <position position="260"/>
    </location>
    <ligand>
        <name>S-adenosyl-L-methionine</name>
        <dbReference type="ChEBI" id="CHEBI:59789"/>
    </ligand>
</feature>
<feature type="binding site" evidence="1">
    <location>
        <position position="277"/>
    </location>
    <ligand>
        <name>S-adenosyl-L-methionine</name>
        <dbReference type="ChEBI" id="CHEBI:59789"/>
    </ligand>
</feature>
<gene>
    <name evidence="1" type="primary">rlmM</name>
    <name type="ordered locus">EFER_0261</name>
</gene>